<protein>
    <recommendedName>
        <fullName evidence="1">Phosphatidylserine decarboxylase proenzyme</fullName>
        <ecNumber evidence="1">4.1.1.65</ecNumber>
    </recommendedName>
    <component>
        <recommendedName>
            <fullName evidence="1">Phosphatidylserine decarboxylase alpha chain</fullName>
        </recommendedName>
    </component>
    <component>
        <recommendedName>
            <fullName evidence="1">Phosphatidylserine decarboxylase beta chain</fullName>
        </recommendedName>
    </component>
</protein>
<gene>
    <name evidence="1" type="primary">psd</name>
    <name type="ordered locus">Pcar_1908</name>
</gene>
<evidence type="ECO:0000255" key="1">
    <source>
        <dbReference type="HAMAP-Rule" id="MF_00664"/>
    </source>
</evidence>
<reference key="1">
    <citation type="submission" date="2005-10" db="EMBL/GenBank/DDBJ databases">
        <title>Complete sequence of Pelobacter carbinolicus DSM 2380.</title>
        <authorList>
            <person name="Copeland A."/>
            <person name="Lucas S."/>
            <person name="Lapidus A."/>
            <person name="Barry K."/>
            <person name="Detter J.C."/>
            <person name="Glavina T."/>
            <person name="Hammon N."/>
            <person name="Israni S."/>
            <person name="Pitluck S."/>
            <person name="Chertkov O."/>
            <person name="Schmutz J."/>
            <person name="Larimer F."/>
            <person name="Land M."/>
            <person name="Kyrpides N."/>
            <person name="Ivanova N."/>
            <person name="Richardson P."/>
        </authorList>
    </citation>
    <scope>NUCLEOTIDE SEQUENCE [LARGE SCALE GENOMIC DNA]</scope>
    <source>
        <strain>DSM 2380 / NBRC 103641 / GraBd1</strain>
    </source>
</reference>
<name>PSD_SYNC1</name>
<organism>
    <name type="scientific">Syntrophotalea carbinolica (strain DSM 2380 / NBRC 103641 / GraBd1)</name>
    <name type="common">Pelobacter carbinolicus</name>
    <dbReference type="NCBI Taxonomy" id="338963"/>
    <lineage>
        <taxon>Bacteria</taxon>
        <taxon>Pseudomonadati</taxon>
        <taxon>Thermodesulfobacteriota</taxon>
        <taxon>Desulfuromonadia</taxon>
        <taxon>Desulfuromonadales</taxon>
        <taxon>Syntrophotaleaceae</taxon>
        <taxon>Syntrophotalea</taxon>
    </lineage>
</organism>
<accession>Q3A3A8</accession>
<comment type="function">
    <text evidence="1">Catalyzes the formation of phosphatidylethanolamine (PtdEtn) from phosphatidylserine (PtdSer).</text>
</comment>
<comment type="catalytic activity">
    <reaction evidence="1">
        <text>a 1,2-diacyl-sn-glycero-3-phospho-L-serine + H(+) = a 1,2-diacyl-sn-glycero-3-phosphoethanolamine + CO2</text>
        <dbReference type="Rhea" id="RHEA:20828"/>
        <dbReference type="ChEBI" id="CHEBI:15378"/>
        <dbReference type="ChEBI" id="CHEBI:16526"/>
        <dbReference type="ChEBI" id="CHEBI:57262"/>
        <dbReference type="ChEBI" id="CHEBI:64612"/>
        <dbReference type="EC" id="4.1.1.65"/>
    </reaction>
</comment>
<comment type="cofactor">
    <cofactor evidence="1">
        <name>pyruvate</name>
        <dbReference type="ChEBI" id="CHEBI:15361"/>
    </cofactor>
    <text evidence="1">Binds 1 pyruvoyl group covalently per subunit.</text>
</comment>
<comment type="pathway">
    <text evidence="1">Phospholipid metabolism; phosphatidylethanolamine biosynthesis; phosphatidylethanolamine from CDP-diacylglycerol: step 2/2.</text>
</comment>
<comment type="subunit">
    <text evidence="1">Heterodimer of a large membrane-associated beta subunit and a small pyruvoyl-containing alpha subunit.</text>
</comment>
<comment type="subcellular location">
    <subcellularLocation>
        <location evidence="1">Cell membrane</location>
        <topology evidence="1">Peripheral membrane protein</topology>
    </subcellularLocation>
</comment>
<comment type="PTM">
    <text evidence="1">Is synthesized initially as an inactive proenzyme. Formation of the active enzyme involves a self-maturation process in which the active site pyruvoyl group is generated from an internal serine residue via an autocatalytic post-translational modification. Two non-identical subunits are generated from the proenzyme in this reaction, and the pyruvate is formed at the N-terminus of the alpha chain, which is derived from the carboxyl end of the proenzyme. The post-translation cleavage follows an unusual pathway, termed non-hydrolytic serinolysis, in which the side chain hydroxyl group of the serine supplies its oxygen atom to form the C-terminus of the beta chain, while the remainder of the serine residue undergoes an oxidative deamination to produce ammonia and the pyruvoyl prosthetic group on the alpha chain.</text>
</comment>
<comment type="similarity">
    <text evidence="1">Belongs to the phosphatidylserine decarboxylase family. PSD-A subfamily.</text>
</comment>
<sequence length="214" mass="23889">MRNQNQPVAIEGYPFIGLFAFITLVFALLGWSVCTLLFLGLTLFAAYFFRNPDRYSDAEDAAILAPADGKVVYVGPALEERYFKSEVTKISIFMSVFNVHVNRVPMAGKVVDMFYNKGQFLNAAMDKASLHNEQSGMLLEHTSGRRMLVVQIAGLIARRIVTYPVVGDILQRGARYGLIRFGSRVDIYLEDDVDIQVTVGERVCCGETVLGFLK</sequence>
<keyword id="KW-1003">Cell membrane</keyword>
<keyword id="KW-0210">Decarboxylase</keyword>
<keyword id="KW-0444">Lipid biosynthesis</keyword>
<keyword id="KW-0443">Lipid metabolism</keyword>
<keyword id="KW-0456">Lyase</keyword>
<keyword id="KW-0472">Membrane</keyword>
<keyword id="KW-0594">Phospholipid biosynthesis</keyword>
<keyword id="KW-1208">Phospholipid metabolism</keyword>
<keyword id="KW-0670">Pyruvate</keyword>
<keyword id="KW-1185">Reference proteome</keyword>
<keyword id="KW-0865">Zymogen</keyword>
<feature type="chain" id="PRO_0000262241" description="Phosphatidylserine decarboxylase beta chain" evidence="1">
    <location>
        <begin position="1"/>
        <end position="182"/>
    </location>
</feature>
<feature type="chain" id="PRO_0000262242" description="Phosphatidylserine decarboxylase alpha chain" evidence="1">
    <location>
        <begin position="183"/>
        <end position="214"/>
    </location>
</feature>
<feature type="active site" description="Schiff-base intermediate with substrate; via pyruvic acid" evidence="1">
    <location>
        <position position="183"/>
    </location>
</feature>
<feature type="site" description="Cleavage (non-hydrolytic); by autocatalysis" evidence="1">
    <location>
        <begin position="182"/>
        <end position="183"/>
    </location>
</feature>
<feature type="modified residue" description="Pyruvic acid (Ser); by autocatalysis" evidence="1">
    <location>
        <position position="183"/>
    </location>
</feature>
<proteinExistence type="inferred from homology"/>
<dbReference type="EC" id="4.1.1.65" evidence="1"/>
<dbReference type="EMBL" id="CP000142">
    <property type="protein sequence ID" value="ABA89149.1"/>
    <property type="molecule type" value="Genomic_DNA"/>
</dbReference>
<dbReference type="RefSeq" id="WP_011341654.1">
    <property type="nucleotide sequence ID" value="NC_007498.2"/>
</dbReference>
<dbReference type="STRING" id="338963.Pcar_1908"/>
<dbReference type="KEGG" id="pca:Pcar_1908"/>
<dbReference type="eggNOG" id="COG0688">
    <property type="taxonomic scope" value="Bacteria"/>
</dbReference>
<dbReference type="HOGENOM" id="CLU_072492_0_0_7"/>
<dbReference type="OrthoDB" id="9790893at2"/>
<dbReference type="UniPathway" id="UPA00558">
    <property type="reaction ID" value="UER00616"/>
</dbReference>
<dbReference type="Proteomes" id="UP000002534">
    <property type="component" value="Chromosome"/>
</dbReference>
<dbReference type="GO" id="GO:0005886">
    <property type="term" value="C:plasma membrane"/>
    <property type="evidence" value="ECO:0007669"/>
    <property type="project" value="UniProtKB-SubCell"/>
</dbReference>
<dbReference type="GO" id="GO:0004609">
    <property type="term" value="F:phosphatidylserine decarboxylase activity"/>
    <property type="evidence" value="ECO:0007669"/>
    <property type="project" value="UniProtKB-UniRule"/>
</dbReference>
<dbReference type="GO" id="GO:0006646">
    <property type="term" value="P:phosphatidylethanolamine biosynthetic process"/>
    <property type="evidence" value="ECO:0007669"/>
    <property type="project" value="UniProtKB-UniRule"/>
</dbReference>
<dbReference type="HAMAP" id="MF_00664">
    <property type="entry name" value="PS_decarb_PSD_A"/>
    <property type="match status" value="1"/>
</dbReference>
<dbReference type="InterPro" id="IPR003817">
    <property type="entry name" value="PS_Dcarbxylase"/>
</dbReference>
<dbReference type="InterPro" id="IPR033175">
    <property type="entry name" value="PSD-A"/>
</dbReference>
<dbReference type="NCBIfam" id="NF003678">
    <property type="entry name" value="PRK05305.1-2"/>
    <property type="match status" value="1"/>
</dbReference>
<dbReference type="NCBIfam" id="NF003685">
    <property type="entry name" value="PRK05305.2-5"/>
    <property type="match status" value="1"/>
</dbReference>
<dbReference type="PANTHER" id="PTHR35809">
    <property type="entry name" value="ARCHAETIDYLSERINE DECARBOXYLASE PROENZYME-RELATED"/>
    <property type="match status" value="1"/>
</dbReference>
<dbReference type="PANTHER" id="PTHR35809:SF1">
    <property type="entry name" value="ARCHAETIDYLSERINE DECARBOXYLASE PROENZYME-RELATED"/>
    <property type="match status" value="1"/>
</dbReference>
<dbReference type="Pfam" id="PF02666">
    <property type="entry name" value="PS_Dcarbxylase"/>
    <property type="match status" value="1"/>
</dbReference>